<feature type="chain" id="PRO_0000186280" description="Mitogen-activated protein kinase 11">
    <location>
        <begin position="1"/>
        <end position="364"/>
    </location>
</feature>
<feature type="domain" description="Protein kinase" evidence="2">
    <location>
        <begin position="24"/>
        <end position="308"/>
    </location>
</feature>
<feature type="region of interest" description="Disordered" evidence="3">
    <location>
        <begin position="311"/>
        <end position="331"/>
    </location>
</feature>
<feature type="region of interest" description="Disordered" evidence="3">
    <location>
        <begin position="343"/>
        <end position="364"/>
    </location>
</feature>
<feature type="short sequence motif" description="TXY">
    <location>
        <begin position="180"/>
        <end position="182"/>
    </location>
</feature>
<feature type="compositionally biased region" description="Acidic residues" evidence="3">
    <location>
        <begin position="314"/>
        <end position="326"/>
    </location>
</feature>
<feature type="active site" description="Proton acceptor" evidence="2">
    <location>
        <position position="150"/>
    </location>
</feature>
<feature type="binding site" evidence="2">
    <location>
        <begin position="30"/>
        <end position="38"/>
    </location>
    <ligand>
        <name>ATP</name>
        <dbReference type="ChEBI" id="CHEBI:30616"/>
    </ligand>
</feature>
<feature type="binding site" evidence="2">
    <location>
        <position position="53"/>
    </location>
    <ligand>
        <name>ATP</name>
        <dbReference type="ChEBI" id="CHEBI:30616"/>
    </ligand>
</feature>
<feature type="binding site">
    <location>
        <position position="71"/>
    </location>
    <ligand>
        <name>nilotinib</name>
        <dbReference type="ChEBI" id="CHEBI:52172"/>
    </ligand>
</feature>
<feature type="modified residue" description="Phosphothreonine; by MAP2K3, MAP2K4 and MAP2K6" evidence="11 20">
    <location>
        <position position="180"/>
    </location>
</feature>
<feature type="modified residue" description="Phosphotyrosine; by MAP2K3, MAP2K4 and MAP2K6" evidence="11 20">
    <location>
        <position position="182"/>
    </location>
</feature>
<feature type="modified residue" description="Phosphotyrosine; by ZAP70" evidence="1">
    <location>
        <position position="323"/>
    </location>
</feature>
<feature type="splice variant" id="VSP_055221" description="In isoform 2." evidence="17">
    <location>
        <begin position="1"/>
        <end position="108"/>
    </location>
</feature>
<feature type="splice variant" id="VSP_055222" description="In isoform 2." evidence="17">
    <original>VDIWSVGCIMAELLQGKALFPGSDYIDQLKRIMEVVGTPSPEVLAKISSEHARTYIQSLPPMPQKDLSSIFRGANPLAIDLLGRMLVLDSDQRVSAAEALAHAYFSQYHDPEDEPEAE</original>
    <variation>GAGGRPWGDEGQGPRLALDWLCMPGLRGQARSPRMWDPHSKVALQRPLEHDGCWPPLAVQLWTSPCLGGLGMAEEGVCPSWGLDVTVGLLEEGRGVGTLMEVPSPSHSGYLVRGLHHG</variation>
    <location>
        <begin position="204"/>
        <end position="321"/>
    </location>
</feature>
<feature type="splice variant" id="VSP_055223" description="In isoform 2." evidence="17">
    <location>
        <begin position="322"/>
        <end position="364"/>
    </location>
</feature>
<feature type="sequence variant" id="VAR_042264" description="In a lung neuroendocrine carcinoma sample; somatic mutation." evidence="8">
    <original>A</original>
    <variation>V</variation>
    <location>
        <position position="221"/>
    </location>
</feature>
<feature type="sequence variant" id="VAR_025176" description="In dbSNP:rs33932986." evidence="8 15">
    <original>R</original>
    <variation>H</variation>
    <location>
        <position position="275"/>
    </location>
</feature>
<feature type="mutagenesis site" description="Inactivation." evidence="7">
    <original>T</original>
    <variation>A</variation>
    <location>
        <position position="180"/>
    </location>
</feature>
<feature type="mutagenesis site" description="Inactivation." evidence="7">
    <original>Y</original>
    <variation>F</variation>
    <location>
        <position position="182"/>
    </location>
</feature>
<feature type="sequence conflict" description="In Ref. 8; BAF84534." evidence="19" ref="8">
    <original>D</original>
    <variation>V</variation>
    <location>
        <position position="98"/>
    </location>
</feature>
<feature type="sequence conflict" description="In Ref. 1; AAB05036." evidence="19" ref="1">
    <original>LS</original>
    <variation>GAHQGARLAL</variation>
    <location>
        <begin position="122"/>
        <end position="123"/>
    </location>
</feature>
<feature type="sequence conflict" description="In Ref. 6; AAB66313." evidence="19" ref="6">
    <original>S</original>
    <variation>G</variation>
    <location>
        <position position="326"/>
    </location>
</feature>
<feature type="strand" evidence="23">
    <location>
        <begin position="8"/>
        <end position="15"/>
    </location>
</feature>
<feature type="strand" evidence="23">
    <location>
        <begin position="17"/>
        <end position="21"/>
    </location>
</feature>
<feature type="strand" evidence="23">
    <location>
        <begin position="24"/>
        <end position="29"/>
    </location>
</feature>
<feature type="strand" evidence="21">
    <location>
        <begin position="31"/>
        <end position="33"/>
    </location>
</feature>
<feature type="turn" evidence="22">
    <location>
        <begin position="34"/>
        <end position="37"/>
    </location>
</feature>
<feature type="strand" evidence="23">
    <location>
        <begin position="38"/>
        <end position="43"/>
    </location>
</feature>
<feature type="turn" evidence="23">
    <location>
        <begin position="44"/>
        <end position="47"/>
    </location>
</feature>
<feature type="strand" evidence="23">
    <location>
        <begin position="48"/>
        <end position="54"/>
    </location>
</feature>
<feature type="helix" evidence="23">
    <location>
        <begin position="62"/>
        <end position="77"/>
    </location>
</feature>
<feature type="strand" evidence="23">
    <location>
        <begin position="86"/>
        <end position="90"/>
    </location>
</feature>
<feature type="helix" evidence="23">
    <location>
        <begin position="96"/>
        <end position="98"/>
    </location>
</feature>
<feature type="strand" evidence="23">
    <location>
        <begin position="103"/>
        <end position="107"/>
    </location>
</feature>
<feature type="strand" evidence="23">
    <location>
        <begin position="110"/>
        <end position="112"/>
    </location>
</feature>
<feature type="helix" evidence="23">
    <location>
        <begin position="113"/>
        <end position="119"/>
    </location>
</feature>
<feature type="helix" evidence="23">
    <location>
        <begin position="124"/>
        <end position="143"/>
    </location>
</feature>
<feature type="helix" evidence="23">
    <location>
        <begin position="153"/>
        <end position="155"/>
    </location>
</feature>
<feature type="strand" evidence="23">
    <location>
        <begin position="156"/>
        <end position="158"/>
    </location>
</feature>
<feature type="strand" evidence="23">
    <location>
        <begin position="164"/>
        <end position="166"/>
    </location>
</feature>
<feature type="helix" evidence="21">
    <location>
        <begin position="179"/>
        <end position="182"/>
    </location>
</feature>
<feature type="helix" evidence="23">
    <location>
        <begin position="185"/>
        <end position="188"/>
    </location>
</feature>
<feature type="helix" evidence="23">
    <location>
        <begin position="191"/>
        <end position="194"/>
    </location>
</feature>
<feature type="helix" evidence="23">
    <location>
        <begin position="203"/>
        <end position="218"/>
    </location>
</feature>
<feature type="helix" evidence="23">
    <location>
        <begin position="228"/>
        <end position="239"/>
    </location>
</feature>
<feature type="helix" evidence="23">
    <location>
        <begin position="244"/>
        <end position="249"/>
    </location>
</feature>
<feature type="turn" evidence="23">
    <location>
        <begin position="253"/>
        <end position="255"/>
    </location>
</feature>
<feature type="helix" evidence="23">
    <location>
        <begin position="256"/>
        <end position="260"/>
    </location>
</feature>
<feature type="helix" evidence="23">
    <location>
        <begin position="270"/>
        <end position="273"/>
    </location>
</feature>
<feature type="turn" evidence="21">
    <location>
        <begin position="274"/>
        <end position="276"/>
    </location>
</feature>
<feature type="helix" evidence="23">
    <location>
        <begin position="279"/>
        <end position="285"/>
    </location>
</feature>
<feature type="turn" evidence="23">
    <location>
        <begin position="286"/>
        <end position="288"/>
    </location>
</feature>
<feature type="helix" evidence="23">
    <location>
        <begin position="293"/>
        <end position="295"/>
    </location>
</feature>
<feature type="helix" evidence="23">
    <location>
        <begin position="299"/>
        <end position="302"/>
    </location>
</feature>
<feature type="helix" evidence="23">
    <location>
        <begin position="306"/>
        <end position="308"/>
    </location>
</feature>
<feature type="turn" evidence="23">
    <location>
        <begin position="309"/>
        <end position="311"/>
    </location>
</feature>
<feature type="helix" evidence="23">
    <location>
        <begin position="314"/>
        <end position="316"/>
    </location>
</feature>
<feature type="helix" evidence="23">
    <location>
        <begin position="326"/>
        <end position="329"/>
    </location>
</feature>
<feature type="helix" evidence="23">
    <location>
        <begin position="334"/>
        <end position="347"/>
    </location>
</feature>
<dbReference type="EC" id="2.7.11.24" evidence="10"/>
<dbReference type="EMBL" id="U53442">
    <property type="protein sequence ID" value="AAB05036.1"/>
    <property type="molecule type" value="mRNA"/>
</dbReference>
<dbReference type="EMBL" id="AF001008">
    <property type="protein sequence ID" value="AAC51250.1"/>
    <property type="molecule type" value="mRNA"/>
</dbReference>
<dbReference type="EMBL" id="AF001174">
    <property type="protein sequence ID" value="AAC51373.1"/>
    <property type="molecule type" value="mRNA"/>
</dbReference>
<dbReference type="EMBL" id="AF031135">
    <property type="protein sequence ID" value="AAC12714.1"/>
    <property type="molecule type" value="mRNA"/>
</dbReference>
<dbReference type="EMBL" id="Y14440">
    <property type="protein sequence ID" value="CAA74792.1"/>
    <property type="molecule type" value="mRNA"/>
</dbReference>
<dbReference type="EMBL" id="U92268">
    <property type="protein sequence ID" value="AAB66313.1"/>
    <property type="molecule type" value="mRNA"/>
</dbReference>
<dbReference type="EMBL" id="CR456514">
    <property type="protein sequence ID" value="CAG30400.1"/>
    <property type="molecule type" value="mRNA"/>
</dbReference>
<dbReference type="EMBL" id="DQ279722">
    <property type="protein sequence ID" value="ABB72677.1"/>
    <property type="molecule type" value="Genomic_DNA"/>
</dbReference>
<dbReference type="EMBL" id="AK291845">
    <property type="protein sequence ID" value="BAF84534.1"/>
    <property type="molecule type" value="mRNA"/>
</dbReference>
<dbReference type="EMBL" id="AK299745">
    <property type="protein sequence ID" value="BAH13116.1"/>
    <property type="molecule type" value="mRNA"/>
</dbReference>
<dbReference type="EMBL" id="EU332851">
    <property type="protein sequence ID" value="ABY87540.1"/>
    <property type="molecule type" value="Genomic_DNA"/>
</dbReference>
<dbReference type="EMBL" id="JX512451">
    <property type="protein sequence ID" value="AGC09598.1"/>
    <property type="molecule type" value="Genomic_DNA"/>
</dbReference>
<dbReference type="EMBL" id="AL022328">
    <property type="status" value="NOT_ANNOTATED_CDS"/>
    <property type="molecule type" value="Genomic_DNA"/>
</dbReference>
<dbReference type="EMBL" id="CH471138">
    <property type="protein sequence ID" value="EAW73524.1"/>
    <property type="molecule type" value="Genomic_DNA"/>
</dbReference>
<dbReference type="EMBL" id="CH471138">
    <property type="protein sequence ID" value="EAW73525.1"/>
    <property type="molecule type" value="Genomic_DNA"/>
</dbReference>
<dbReference type="EMBL" id="CH471138">
    <property type="protein sequence ID" value="EAW73526.1"/>
    <property type="molecule type" value="Genomic_DNA"/>
</dbReference>
<dbReference type="EMBL" id="BC027933">
    <property type="protein sequence ID" value="AAH27933.1"/>
    <property type="molecule type" value="mRNA"/>
</dbReference>
<dbReference type="CCDS" id="CCDS14090.1">
    <molecule id="Q15759-1"/>
</dbReference>
<dbReference type="PIR" id="G02524">
    <property type="entry name" value="G02524"/>
</dbReference>
<dbReference type="PIR" id="JC5529">
    <property type="entry name" value="JC5529"/>
</dbReference>
<dbReference type="RefSeq" id="NP_002742.3">
    <molecule id="Q15759-1"/>
    <property type="nucleotide sequence ID" value="NM_002751.6"/>
</dbReference>
<dbReference type="PDB" id="3GC8">
    <property type="method" value="X-ray"/>
    <property type="resolution" value="2.40 A"/>
    <property type="chains" value="A/B=1-364"/>
</dbReference>
<dbReference type="PDB" id="3GC9">
    <property type="method" value="X-ray"/>
    <property type="resolution" value="2.05 A"/>
    <property type="chains" value="A/B=1-364"/>
</dbReference>
<dbReference type="PDB" id="3GP0">
    <property type="method" value="X-ray"/>
    <property type="resolution" value="1.90 A"/>
    <property type="chains" value="A=5-350"/>
</dbReference>
<dbReference type="PDB" id="8YGW">
    <property type="method" value="X-ray"/>
    <property type="resolution" value="3.30 A"/>
    <property type="chains" value="A=1-364"/>
</dbReference>
<dbReference type="PDBsum" id="3GC8"/>
<dbReference type="PDBsum" id="3GC9"/>
<dbReference type="PDBsum" id="3GP0"/>
<dbReference type="PDBsum" id="8YGW"/>
<dbReference type="SMR" id="Q15759"/>
<dbReference type="BioGRID" id="111586">
    <property type="interactions" value="43"/>
</dbReference>
<dbReference type="CORUM" id="Q15759"/>
<dbReference type="FunCoup" id="Q15759">
    <property type="interactions" value="3341"/>
</dbReference>
<dbReference type="IntAct" id="Q15759">
    <property type="interactions" value="38"/>
</dbReference>
<dbReference type="MINT" id="Q15759"/>
<dbReference type="STRING" id="9606.ENSP00000333685"/>
<dbReference type="BindingDB" id="Q15759"/>
<dbReference type="ChEMBL" id="CHEMBL3961"/>
<dbReference type="DrugBank" id="DB03777">
    <property type="generic name" value="Bisindolylmaleimide I"/>
</dbReference>
<dbReference type="DrugBank" id="DB12429">
    <property type="generic name" value="CI-1040"/>
</dbReference>
<dbReference type="DrugBank" id="DB05157">
    <property type="generic name" value="KC706"/>
</dbReference>
<dbReference type="DrugBank" id="DB01017">
    <property type="generic name" value="Minocycline"/>
</dbReference>
<dbReference type="DrugBank" id="DB07138">
    <property type="generic name" value="Neflamapimod"/>
</dbReference>
<dbReference type="DrugBank" id="DB08896">
    <property type="generic name" value="Regorafenib"/>
</dbReference>
<dbReference type="DrugBank" id="DB04462">
    <property type="generic name" value="Tetrabromo-2-Benzotriazole"/>
</dbReference>
<dbReference type="DrugCentral" id="Q15759"/>
<dbReference type="GuidetoPHARMACOLOGY" id="1500"/>
<dbReference type="iPTMnet" id="Q15759"/>
<dbReference type="PhosphoSitePlus" id="Q15759"/>
<dbReference type="BioMuta" id="MAPK11"/>
<dbReference type="DMDM" id="134047835"/>
<dbReference type="CPTAC" id="CPTAC-2998"/>
<dbReference type="CPTAC" id="CPTAC-872"/>
<dbReference type="CPTAC" id="CPTAC-873"/>
<dbReference type="jPOST" id="Q15759"/>
<dbReference type="MassIVE" id="Q15759"/>
<dbReference type="PaxDb" id="9606-ENSP00000333685"/>
<dbReference type="PeptideAtlas" id="Q15759"/>
<dbReference type="ProteomicsDB" id="60745">
    <molecule id="Q15759-1"/>
</dbReference>
<dbReference type="ProteomicsDB" id="6736"/>
<dbReference type="Antibodypedia" id="28468">
    <property type="antibodies" value="509 antibodies from 39 providers"/>
</dbReference>
<dbReference type="DNASU" id="5600"/>
<dbReference type="Ensembl" id="ENST00000330651.11">
    <molecule id="Q15759-1"/>
    <property type="protein sequence ID" value="ENSP00000333685.6"/>
    <property type="gene ID" value="ENSG00000185386.15"/>
</dbReference>
<dbReference type="Ensembl" id="ENST00000395764.5">
    <molecule id="Q15759-1"/>
    <property type="protein sequence ID" value="ENSP00000379113.1"/>
    <property type="gene ID" value="ENSG00000185386.15"/>
</dbReference>
<dbReference type="GeneID" id="5600"/>
<dbReference type="KEGG" id="hsa:5600"/>
<dbReference type="MANE-Select" id="ENST00000330651.11">
    <property type="protein sequence ID" value="ENSP00000333685.6"/>
    <property type="RefSeq nucleotide sequence ID" value="NM_002751.7"/>
    <property type="RefSeq protein sequence ID" value="NP_002742.3"/>
</dbReference>
<dbReference type="UCSC" id="uc003bkr.4">
    <molecule id="Q15759-1"/>
    <property type="organism name" value="human"/>
</dbReference>
<dbReference type="AGR" id="HGNC:6873"/>
<dbReference type="CTD" id="5600"/>
<dbReference type="DisGeNET" id="5600"/>
<dbReference type="GeneCards" id="MAPK11"/>
<dbReference type="HGNC" id="HGNC:6873">
    <property type="gene designation" value="MAPK11"/>
</dbReference>
<dbReference type="HPA" id="ENSG00000185386">
    <property type="expression patterns" value="Tissue enhanced (brain)"/>
</dbReference>
<dbReference type="MIM" id="602898">
    <property type="type" value="gene"/>
</dbReference>
<dbReference type="neXtProt" id="NX_Q15759"/>
<dbReference type="OpenTargets" id="ENSG00000185386"/>
<dbReference type="PharmGKB" id="PA30618"/>
<dbReference type="VEuPathDB" id="HostDB:ENSG00000185386"/>
<dbReference type="eggNOG" id="KOG0660">
    <property type="taxonomic scope" value="Eukaryota"/>
</dbReference>
<dbReference type="GeneTree" id="ENSGT00940000160790"/>
<dbReference type="HOGENOM" id="CLU_000288_181_1_1"/>
<dbReference type="InParanoid" id="Q15759"/>
<dbReference type="OMA" id="MDIPRPE"/>
<dbReference type="OrthoDB" id="192887at2759"/>
<dbReference type="PAN-GO" id="Q15759">
    <property type="GO annotations" value="4 GO annotations based on evolutionary models"/>
</dbReference>
<dbReference type="PhylomeDB" id="Q15759"/>
<dbReference type="TreeFam" id="TF105100"/>
<dbReference type="BRENDA" id="2.7.11.24">
    <property type="organism ID" value="2681"/>
</dbReference>
<dbReference type="PathwayCommons" id="Q15759"/>
<dbReference type="Reactome" id="R-HSA-168638">
    <property type="pathway name" value="NOD1/2 Signaling Pathway"/>
</dbReference>
<dbReference type="Reactome" id="R-HSA-171007">
    <property type="pathway name" value="p38MAPK events"/>
</dbReference>
<dbReference type="Reactome" id="R-HSA-198753">
    <property type="pathway name" value="ERK/MAPK targets"/>
</dbReference>
<dbReference type="Reactome" id="R-HSA-2151209">
    <property type="pathway name" value="Activation of PPARGC1A (PGC-1alpha) by phosphorylation"/>
</dbReference>
<dbReference type="Reactome" id="R-HSA-2559580">
    <property type="pathway name" value="Oxidative Stress Induced Senescence"/>
</dbReference>
<dbReference type="Reactome" id="R-HSA-4420097">
    <property type="pathway name" value="VEGFA-VEGFR2 Pathway"/>
</dbReference>
<dbReference type="Reactome" id="R-HSA-450302">
    <property type="pathway name" value="activated TAK1 mediates p38 MAPK activation"/>
</dbReference>
<dbReference type="Reactome" id="R-HSA-450341">
    <property type="pathway name" value="Activation of the AP-1 family of transcription factors"/>
</dbReference>
<dbReference type="Reactome" id="R-HSA-450604">
    <property type="pathway name" value="KSRP (KHSRP) binds and destabilizes mRNA"/>
</dbReference>
<dbReference type="Reactome" id="R-HSA-525793">
    <property type="pathway name" value="Myogenesis"/>
</dbReference>
<dbReference type="Reactome" id="R-HSA-5668599">
    <property type="pathway name" value="RHO GTPases Activate NADPH Oxidases"/>
</dbReference>
<dbReference type="Reactome" id="R-HSA-6804756">
    <property type="pathway name" value="Regulation of TP53 Activity through Phosphorylation"/>
</dbReference>
<dbReference type="SignaLink" id="Q15759"/>
<dbReference type="SIGNOR" id="Q15759"/>
<dbReference type="BioGRID-ORCS" id="5600">
    <property type="hits" value="14 hits in 1199 CRISPR screens"/>
</dbReference>
<dbReference type="CD-CODE" id="232F8A39">
    <property type="entry name" value="P-body"/>
</dbReference>
<dbReference type="CD-CODE" id="B5B9A610">
    <property type="entry name" value="PML body"/>
</dbReference>
<dbReference type="EvolutionaryTrace" id="Q15759"/>
<dbReference type="GeneWiki" id="MAPK11"/>
<dbReference type="GenomeRNAi" id="5600"/>
<dbReference type="Pharos" id="Q15759">
    <property type="development level" value="Tchem"/>
</dbReference>
<dbReference type="PRO" id="PR:Q15759"/>
<dbReference type="Proteomes" id="UP000005640">
    <property type="component" value="Chromosome 22"/>
</dbReference>
<dbReference type="RNAct" id="Q15759">
    <property type="molecule type" value="protein"/>
</dbReference>
<dbReference type="Bgee" id="ENSG00000185386">
    <property type="expression patterns" value="Expressed in right frontal lobe and 116 other cell types or tissues"/>
</dbReference>
<dbReference type="ExpressionAtlas" id="Q15759">
    <property type="expression patterns" value="baseline and differential"/>
</dbReference>
<dbReference type="GO" id="GO:0005737">
    <property type="term" value="C:cytoplasm"/>
    <property type="evidence" value="ECO:0000318"/>
    <property type="project" value="GO_Central"/>
</dbReference>
<dbReference type="GO" id="GO:0005829">
    <property type="term" value="C:cytosol"/>
    <property type="evidence" value="ECO:0000304"/>
    <property type="project" value="Reactome"/>
</dbReference>
<dbReference type="GO" id="GO:0005654">
    <property type="term" value="C:nucleoplasm"/>
    <property type="evidence" value="ECO:0000304"/>
    <property type="project" value="Reactome"/>
</dbReference>
<dbReference type="GO" id="GO:0005634">
    <property type="term" value="C:nucleus"/>
    <property type="evidence" value="ECO:0000318"/>
    <property type="project" value="GO_Central"/>
</dbReference>
<dbReference type="GO" id="GO:0005524">
    <property type="term" value="F:ATP binding"/>
    <property type="evidence" value="ECO:0007669"/>
    <property type="project" value="UniProtKB-KW"/>
</dbReference>
<dbReference type="GO" id="GO:0004707">
    <property type="term" value="F:MAP kinase activity"/>
    <property type="evidence" value="ECO:0000314"/>
    <property type="project" value="UniProtKB"/>
</dbReference>
<dbReference type="GO" id="GO:0106310">
    <property type="term" value="F:protein serine kinase activity"/>
    <property type="evidence" value="ECO:0007669"/>
    <property type="project" value="RHEA"/>
</dbReference>
<dbReference type="GO" id="GO:0004674">
    <property type="term" value="F:protein serine/threonine kinase activity"/>
    <property type="evidence" value="ECO:0000314"/>
    <property type="project" value="UniProtKB"/>
</dbReference>
<dbReference type="GO" id="GO:0060348">
    <property type="term" value="P:bone development"/>
    <property type="evidence" value="ECO:0007669"/>
    <property type="project" value="Ensembl"/>
</dbReference>
<dbReference type="GO" id="GO:0060038">
    <property type="term" value="P:cardiac muscle cell proliferation"/>
    <property type="evidence" value="ECO:0007669"/>
    <property type="project" value="Ensembl"/>
</dbReference>
<dbReference type="GO" id="GO:0071347">
    <property type="term" value="P:cellular response to interleukin-1"/>
    <property type="evidence" value="ECO:0000314"/>
    <property type="project" value="UniProtKB"/>
</dbReference>
<dbReference type="GO" id="GO:0071493">
    <property type="term" value="P:cellular response to UV-B"/>
    <property type="evidence" value="ECO:0000314"/>
    <property type="project" value="UniProtKB"/>
</dbReference>
<dbReference type="GO" id="GO:0098586">
    <property type="term" value="P:cellular response to virus"/>
    <property type="evidence" value="ECO:0000315"/>
    <property type="project" value="UniProtKB"/>
</dbReference>
<dbReference type="GO" id="GO:0090398">
    <property type="term" value="P:cellular senescence"/>
    <property type="evidence" value="ECO:0000304"/>
    <property type="project" value="Reactome"/>
</dbReference>
<dbReference type="GO" id="GO:0035556">
    <property type="term" value="P:intracellular signal transduction"/>
    <property type="evidence" value="ECO:0000318"/>
    <property type="project" value="GO_Central"/>
</dbReference>
<dbReference type="GO" id="GO:0060044">
    <property type="term" value="P:negative regulation of cardiac muscle cell proliferation"/>
    <property type="evidence" value="ECO:0007669"/>
    <property type="project" value="Ensembl"/>
</dbReference>
<dbReference type="GO" id="GO:0001649">
    <property type="term" value="P:osteoblast differentiation"/>
    <property type="evidence" value="ECO:0007669"/>
    <property type="project" value="Ensembl"/>
</dbReference>
<dbReference type="GO" id="GO:0038066">
    <property type="term" value="P:p38MAPK cascade"/>
    <property type="evidence" value="ECO:0000314"/>
    <property type="project" value="UniProt"/>
</dbReference>
<dbReference type="GO" id="GO:0010628">
    <property type="term" value="P:positive regulation of gene expression"/>
    <property type="evidence" value="ECO:0000315"/>
    <property type="project" value="UniProtKB"/>
</dbReference>
<dbReference type="GO" id="GO:0032735">
    <property type="term" value="P:positive regulation of interleukin-12 production"/>
    <property type="evidence" value="ECO:0000315"/>
    <property type="project" value="UniProtKB"/>
</dbReference>
<dbReference type="GO" id="GO:0051149">
    <property type="term" value="P:positive regulation of muscle cell differentiation"/>
    <property type="evidence" value="ECO:0000304"/>
    <property type="project" value="Reactome"/>
</dbReference>
<dbReference type="GO" id="GO:0051403">
    <property type="term" value="P:stress-activated MAPK cascade"/>
    <property type="evidence" value="ECO:0000314"/>
    <property type="project" value="UniProtKB"/>
</dbReference>
<dbReference type="GO" id="GO:0031098">
    <property type="term" value="P:stress-activated protein kinase signaling cascade"/>
    <property type="evidence" value="ECO:0000314"/>
    <property type="project" value="UniProt"/>
</dbReference>
<dbReference type="FunFam" id="1.10.510.10:FF:000063">
    <property type="entry name" value="Mitogen-activated protein kinase 14"/>
    <property type="match status" value="1"/>
</dbReference>
<dbReference type="FunFam" id="3.30.200.20:FF:000769">
    <property type="entry name" value="Mitogen-activated protein kinase 14"/>
    <property type="match status" value="1"/>
</dbReference>
<dbReference type="Gene3D" id="3.30.200.20">
    <property type="entry name" value="Phosphorylase Kinase, domain 1"/>
    <property type="match status" value="1"/>
</dbReference>
<dbReference type="Gene3D" id="1.10.510.10">
    <property type="entry name" value="Transferase(Phosphotransferase) domain 1"/>
    <property type="match status" value="1"/>
</dbReference>
<dbReference type="InterPro" id="IPR011009">
    <property type="entry name" value="Kinase-like_dom_sf"/>
</dbReference>
<dbReference type="InterPro" id="IPR050117">
    <property type="entry name" value="MAP_kinase"/>
</dbReference>
<dbReference type="InterPro" id="IPR003527">
    <property type="entry name" value="MAP_kinase_CS"/>
</dbReference>
<dbReference type="InterPro" id="IPR008352">
    <property type="entry name" value="MAPK_p38-like"/>
</dbReference>
<dbReference type="InterPro" id="IPR000719">
    <property type="entry name" value="Prot_kinase_dom"/>
</dbReference>
<dbReference type="InterPro" id="IPR017441">
    <property type="entry name" value="Protein_kinase_ATP_BS"/>
</dbReference>
<dbReference type="PANTHER" id="PTHR24055">
    <property type="entry name" value="MITOGEN-ACTIVATED PROTEIN KINASE"/>
    <property type="match status" value="1"/>
</dbReference>
<dbReference type="Pfam" id="PF00069">
    <property type="entry name" value="Pkinase"/>
    <property type="match status" value="1"/>
</dbReference>
<dbReference type="PRINTS" id="PR01773">
    <property type="entry name" value="P38MAPKINASE"/>
</dbReference>
<dbReference type="SMART" id="SM00220">
    <property type="entry name" value="S_TKc"/>
    <property type="match status" value="1"/>
</dbReference>
<dbReference type="SUPFAM" id="SSF56112">
    <property type="entry name" value="Protein kinase-like (PK-like)"/>
    <property type="match status" value="1"/>
</dbReference>
<dbReference type="PROSITE" id="PS01351">
    <property type="entry name" value="MAPK"/>
    <property type="match status" value="1"/>
</dbReference>
<dbReference type="PROSITE" id="PS00107">
    <property type="entry name" value="PROTEIN_KINASE_ATP"/>
    <property type="match status" value="1"/>
</dbReference>
<dbReference type="PROSITE" id="PS50011">
    <property type="entry name" value="PROTEIN_KINASE_DOM"/>
    <property type="match status" value="1"/>
</dbReference>
<keyword id="KW-0002">3D-structure</keyword>
<keyword id="KW-0025">Alternative splicing</keyword>
<keyword id="KW-0067">ATP-binding</keyword>
<keyword id="KW-0963">Cytoplasm</keyword>
<keyword id="KW-0418">Kinase</keyword>
<keyword id="KW-0547">Nucleotide-binding</keyword>
<keyword id="KW-0539">Nucleus</keyword>
<keyword id="KW-0597">Phosphoprotein</keyword>
<keyword id="KW-1267">Proteomics identification</keyword>
<keyword id="KW-1185">Reference proteome</keyword>
<keyword id="KW-0723">Serine/threonine-protein kinase</keyword>
<keyword id="KW-0346">Stress response</keyword>
<keyword id="KW-0804">Transcription</keyword>
<keyword id="KW-0805">Transcription regulation</keyword>
<keyword id="KW-0808">Transferase</keyword>
<reference key="1">
    <citation type="journal article" date="1996" name="J. Biol. Chem.">
        <title>Characterization of the structure and function of a new mitogen-activated protein kinase (p38beta).</title>
        <authorList>
            <person name="Jiang Y."/>
            <person name="Chen C."/>
            <person name="Li Z."/>
            <person name="Guo W."/>
            <person name="Gegner J.A."/>
            <person name="Lin S."/>
            <person name="Han J."/>
        </authorList>
    </citation>
    <scope>NUCLEOTIDE SEQUENCE [MRNA] (ISOFORM 1)</scope>
    <source>
        <tissue>Placenta</tissue>
    </source>
</reference>
<reference key="2">
    <citation type="submission" date="1997-04" db="EMBL/GenBank/DDBJ databases">
        <authorList>
            <person name="Jiang Y."/>
            <person name="Han J."/>
        </authorList>
    </citation>
    <scope>NUCLEOTIDE SEQUENCE [MRNA] (ISOFORM 1)</scope>
</reference>
<reference key="3">
    <citation type="journal article" date="1997" name="Biochem. Biophys. Res. Commun.">
        <title>Novel homologues of CSBP/p38 MAP kinase: activation, substrate specificity and sensitivity to inhibition by pyridinyl imidazoles.</title>
        <authorList>
            <person name="Kumar S."/>
            <person name="McDonnell P.C."/>
            <person name="Gum R.J."/>
            <person name="Hand A.T."/>
            <person name="Lee J.C."/>
            <person name="Young P.R."/>
        </authorList>
    </citation>
    <scope>NUCLEOTIDE SEQUENCE [MRNA] (ISOFORM 1)</scope>
    <source>
        <tissue>Brain</tissue>
    </source>
</reference>
<reference key="4">
    <citation type="journal article" date="1998" name="J. Biol. Chem.">
        <title>Selective activation of p38 mitogen-activated protein (MAP) kinase isoforms by the MAP kinase kinases MKK3 and MKK6.</title>
        <authorList>
            <person name="Enslen H."/>
            <person name="Raingeaud J."/>
            <person name="Davis R.J."/>
        </authorList>
    </citation>
    <scope>NUCLEOTIDE SEQUENCE [MRNA] (ISOFORM 1)</scope>
    <scope>FUNCTION IN PHOSPHORYLATION OF ATF2; ELK1 AND MBP</scope>
    <scope>ACTIVITY REGULATION</scope>
    <source>
        <tissue>Brain</tissue>
    </source>
</reference>
<reference key="5">
    <citation type="journal article" date="1997" name="EMBO J.">
        <title>Activation of the novel stress-activated protein kinase SAPK4 by cytokines and cellular stresses is mediated by SKK3 (MKK6); comparison of its substrate specificity with that of other SAP kinases.</title>
        <authorList>
            <person name="Goedert M."/>
            <person name="Cuenda A."/>
            <person name="Craxton M."/>
            <person name="Jakes R."/>
            <person name="Cohen P."/>
        </authorList>
    </citation>
    <scope>NUCLEOTIDE SEQUENCE [MRNA] (ISOFORM 1)</scope>
    <scope>ACTIVITY REGULATION</scope>
</reference>
<reference key="6">
    <citation type="journal article" date="1997" name="J. Biol. Chem.">
        <title>p38-2, a novel mitogen-activated protein kinase with distinct properties.</title>
        <authorList>
            <person name="Stein B."/>
            <person name="Yang M.X."/>
            <person name="Young D.B."/>
            <person name="Janknecht R."/>
            <person name="Hunter T."/>
            <person name="Murray B.W."/>
            <person name="Barbosa M.S."/>
        </authorList>
    </citation>
    <scope>NUCLEOTIDE SEQUENCE [MRNA] (ISOFORM 1)</scope>
</reference>
<reference key="7">
    <citation type="journal article" date="2004" name="Genome Biol.">
        <title>A genome annotation-driven approach to cloning the human ORFeome.</title>
        <authorList>
            <person name="Collins J.E."/>
            <person name="Wright C.L."/>
            <person name="Edwards C.A."/>
            <person name="Davis M.P."/>
            <person name="Grinham J.A."/>
            <person name="Cole C.G."/>
            <person name="Goward M.E."/>
            <person name="Aguado B."/>
            <person name="Mallya M."/>
            <person name="Mokrab Y."/>
            <person name="Huckle E.J."/>
            <person name="Beare D.M."/>
            <person name="Dunham I."/>
        </authorList>
    </citation>
    <scope>NUCLEOTIDE SEQUENCE [LARGE SCALE MRNA] (ISOFORM 1)</scope>
</reference>
<reference key="8">
    <citation type="journal article" date="2004" name="Nat. Genet.">
        <title>Complete sequencing and characterization of 21,243 full-length human cDNAs.</title>
        <authorList>
            <person name="Ota T."/>
            <person name="Suzuki Y."/>
            <person name="Nishikawa T."/>
            <person name="Otsuki T."/>
            <person name="Sugiyama T."/>
            <person name="Irie R."/>
            <person name="Wakamatsu A."/>
            <person name="Hayashi K."/>
            <person name="Sato H."/>
            <person name="Nagai K."/>
            <person name="Kimura K."/>
            <person name="Makita H."/>
            <person name="Sekine M."/>
            <person name="Obayashi M."/>
            <person name="Nishi T."/>
            <person name="Shibahara T."/>
            <person name="Tanaka T."/>
            <person name="Ishii S."/>
            <person name="Yamamoto J."/>
            <person name="Saito K."/>
            <person name="Kawai Y."/>
            <person name="Isono Y."/>
            <person name="Nakamura Y."/>
            <person name="Nagahari K."/>
            <person name="Murakami K."/>
            <person name="Yasuda T."/>
            <person name="Iwayanagi T."/>
            <person name="Wagatsuma M."/>
            <person name="Shiratori A."/>
            <person name="Sudo H."/>
            <person name="Hosoiri T."/>
            <person name="Kaku Y."/>
            <person name="Kodaira H."/>
            <person name="Kondo H."/>
            <person name="Sugawara M."/>
            <person name="Takahashi M."/>
            <person name="Kanda K."/>
            <person name="Yokoi T."/>
            <person name="Furuya T."/>
            <person name="Kikkawa E."/>
            <person name="Omura Y."/>
            <person name="Abe K."/>
            <person name="Kamihara K."/>
            <person name="Katsuta N."/>
            <person name="Sato K."/>
            <person name="Tanikawa M."/>
            <person name="Yamazaki M."/>
            <person name="Ninomiya K."/>
            <person name="Ishibashi T."/>
            <person name="Yamashita H."/>
            <person name="Murakawa K."/>
            <person name="Fujimori K."/>
            <person name="Tanai H."/>
            <person name="Kimata M."/>
            <person name="Watanabe M."/>
            <person name="Hiraoka S."/>
            <person name="Chiba Y."/>
            <person name="Ishida S."/>
            <person name="Ono Y."/>
            <person name="Takiguchi S."/>
            <person name="Watanabe S."/>
            <person name="Yosida M."/>
            <person name="Hotuta T."/>
            <person name="Kusano J."/>
            <person name="Kanehori K."/>
            <person name="Takahashi-Fujii A."/>
            <person name="Hara H."/>
            <person name="Tanase T.-O."/>
            <person name="Nomura Y."/>
            <person name="Togiya S."/>
            <person name="Komai F."/>
            <person name="Hara R."/>
            <person name="Takeuchi K."/>
            <person name="Arita M."/>
            <person name="Imose N."/>
            <person name="Musashino K."/>
            <person name="Yuuki H."/>
            <person name="Oshima A."/>
            <person name="Sasaki N."/>
            <person name="Aotsuka S."/>
            <person name="Yoshikawa Y."/>
            <person name="Matsunawa H."/>
            <person name="Ichihara T."/>
            <person name="Shiohata N."/>
            <person name="Sano S."/>
            <person name="Moriya S."/>
            <person name="Momiyama H."/>
            <person name="Satoh N."/>
            <person name="Takami S."/>
            <person name="Terashima Y."/>
            <person name="Suzuki O."/>
            <person name="Nakagawa S."/>
            <person name="Senoh A."/>
            <person name="Mizoguchi H."/>
            <person name="Goto Y."/>
            <person name="Shimizu F."/>
            <person name="Wakebe H."/>
            <person name="Hishigaki H."/>
            <person name="Watanabe T."/>
            <person name="Sugiyama A."/>
            <person name="Takemoto M."/>
            <person name="Kawakami B."/>
            <person name="Yamazaki M."/>
            <person name="Watanabe K."/>
            <person name="Kumagai A."/>
            <person name="Itakura S."/>
            <person name="Fukuzumi Y."/>
            <person name="Fujimori Y."/>
            <person name="Komiyama M."/>
            <person name="Tashiro H."/>
            <person name="Tanigami A."/>
            <person name="Fujiwara T."/>
            <person name="Ono T."/>
            <person name="Yamada K."/>
            <person name="Fujii Y."/>
            <person name="Ozaki K."/>
            <person name="Hirao M."/>
            <person name="Ohmori Y."/>
            <person name="Kawabata A."/>
            <person name="Hikiji T."/>
            <person name="Kobatake N."/>
            <person name="Inagaki H."/>
            <person name="Ikema Y."/>
            <person name="Okamoto S."/>
            <person name="Okitani R."/>
            <person name="Kawakami T."/>
            <person name="Noguchi S."/>
            <person name="Itoh T."/>
            <person name="Shigeta K."/>
            <person name="Senba T."/>
            <person name="Matsumura K."/>
            <person name="Nakajima Y."/>
            <person name="Mizuno T."/>
            <person name="Morinaga M."/>
            <person name="Sasaki M."/>
            <person name="Togashi T."/>
            <person name="Oyama M."/>
            <person name="Hata H."/>
            <person name="Watanabe M."/>
            <person name="Komatsu T."/>
            <person name="Mizushima-Sugano J."/>
            <person name="Satoh T."/>
            <person name="Shirai Y."/>
            <person name="Takahashi Y."/>
            <person name="Nakagawa K."/>
            <person name="Okumura K."/>
            <person name="Nagase T."/>
            <person name="Nomura N."/>
            <person name="Kikuchi H."/>
            <person name="Masuho Y."/>
            <person name="Yamashita R."/>
            <person name="Nakai K."/>
            <person name="Yada T."/>
            <person name="Nakamura Y."/>
            <person name="Ohara O."/>
            <person name="Isogai T."/>
            <person name="Sugano S."/>
        </authorList>
    </citation>
    <scope>NUCLEOTIDE SEQUENCE [LARGE SCALE MRNA] (ISOFORMS 1 AND 2)</scope>
    <source>
        <tissue>Brain</tissue>
    </source>
</reference>
<reference key="9">
    <citation type="submission" date="2005-11" db="EMBL/GenBank/DDBJ databases">
        <authorList>
            <consortium name="NIEHS SNPs program"/>
        </authorList>
    </citation>
    <scope>NUCLEOTIDE SEQUENCE [GENOMIC DNA]</scope>
    <scope>VARIANT HIS-275</scope>
</reference>
<reference key="10">
    <citation type="submission" date="2012-08" db="EMBL/GenBank/DDBJ databases">
        <authorList>
            <consortium name="NHLBI resequencing and genotyping service (RS&amp;G)"/>
        </authorList>
    </citation>
    <scope>NUCLEOTIDE SEQUENCE [GENOMIC DNA]</scope>
</reference>
<reference key="11">
    <citation type="journal article" date="1999" name="Nature">
        <title>The DNA sequence of human chromosome 22.</title>
        <authorList>
            <person name="Dunham I."/>
            <person name="Hunt A.R."/>
            <person name="Collins J.E."/>
            <person name="Bruskiewich R."/>
            <person name="Beare D.M."/>
            <person name="Clamp M."/>
            <person name="Smink L.J."/>
            <person name="Ainscough R."/>
            <person name="Almeida J.P."/>
            <person name="Babbage A.K."/>
            <person name="Bagguley C."/>
            <person name="Bailey J."/>
            <person name="Barlow K.F."/>
            <person name="Bates K.N."/>
            <person name="Beasley O.P."/>
            <person name="Bird C.P."/>
            <person name="Blakey S.E."/>
            <person name="Bridgeman A.M."/>
            <person name="Buck D."/>
            <person name="Burgess J."/>
            <person name="Burrill W.D."/>
            <person name="Burton J."/>
            <person name="Carder C."/>
            <person name="Carter N.P."/>
            <person name="Chen Y."/>
            <person name="Clark G."/>
            <person name="Clegg S.M."/>
            <person name="Cobley V.E."/>
            <person name="Cole C.G."/>
            <person name="Collier R.E."/>
            <person name="Connor R."/>
            <person name="Conroy D."/>
            <person name="Corby N.R."/>
            <person name="Coville G.J."/>
            <person name="Cox A.V."/>
            <person name="Davis J."/>
            <person name="Dawson E."/>
            <person name="Dhami P.D."/>
            <person name="Dockree C."/>
            <person name="Dodsworth S.J."/>
            <person name="Durbin R.M."/>
            <person name="Ellington A.G."/>
            <person name="Evans K.L."/>
            <person name="Fey J.M."/>
            <person name="Fleming K."/>
            <person name="French L."/>
            <person name="Garner A.A."/>
            <person name="Gilbert J.G.R."/>
            <person name="Goward M.E."/>
            <person name="Grafham D.V."/>
            <person name="Griffiths M.N.D."/>
            <person name="Hall C."/>
            <person name="Hall R.E."/>
            <person name="Hall-Tamlyn G."/>
            <person name="Heathcott R.W."/>
            <person name="Ho S."/>
            <person name="Holmes S."/>
            <person name="Hunt S.E."/>
            <person name="Jones M.C."/>
            <person name="Kershaw J."/>
            <person name="Kimberley A.M."/>
            <person name="King A."/>
            <person name="Laird G.K."/>
            <person name="Langford C.F."/>
            <person name="Leversha M.A."/>
            <person name="Lloyd C."/>
            <person name="Lloyd D.M."/>
            <person name="Martyn I.D."/>
            <person name="Mashreghi-Mohammadi M."/>
            <person name="Matthews L.H."/>
            <person name="Mccann O.T."/>
            <person name="Mcclay J."/>
            <person name="Mclaren S."/>
            <person name="McMurray A.A."/>
            <person name="Milne S.A."/>
            <person name="Mortimore B.J."/>
            <person name="Odell C.N."/>
            <person name="Pavitt R."/>
            <person name="Pearce A.V."/>
            <person name="Pearson D."/>
            <person name="Phillimore B.J.C.T."/>
            <person name="Phillips S.H."/>
            <person name="Plumb R.W."/>
            <person name="Ramsay H."/>
            <person name="Ramsey Y."/>
            <person name="Rogers L."/>
            <person name="Ross M.T."/>
            <person name="Scott C.E."/>
            <person name="Sehra H.K."/>
            <person name="Skuce C.D."/>
            <person name="Smalley S."/>
            <person name="Smith M.L."/>
            <person name="Soderlund C."/>
            <person name="Spragon L."/>
            <person name="Steward C.A."/>
            <person name="Sulston J.E."/>
            <person name="Swann R.M."/>
            <person name="Vaudin M."/>
            <person name="Wall M."/>
            <person name="Wallis J.M."/>
            <person name="Whiteley M.N."/>
            <person name="Willey D.L."/>
            <person name="Williams L."/>
            <person name="Williams S.A."/>
            <person name="Williamson H."/>
            <person name="Wilmer T.E."/>
            <person name="Wilming L."/>
            <person name="Wright C.L."/>
            <person name="Hubbard T."/>
            <person name="Bentley D.R."/>
            <person name="Beck S."/>
            <person name="Rogers J."/>
            <person name="Shimizu N."/>
            <person name="Minoshima S."/>
            <person name="Kawasaki K."/>
            <person name="Sasaki T."/>
            <person name="Asakawa S."/>
            <person name="Kudoh J."/>
            <person name="Shintani A."/>
            <person name="Shibuya K."/>
            <person name="Yoshizaki Y."/>
            <person name="Aoki N."/>
            <person name="Mitsuyama S."/>
            <person name="Roe B.A."/>
            <person name="Chen F."/>
            <person name="Chu L."/>
            <person name="Crabtree J."/>
            <person name="Deschamps S."/>
            <person name="Do A."/>
            <person name="Do T."/>
            <person name="Dorman A."/>
            <person name="Fang F."/>
            <person name="Fu Y."/>
            <person name="Hu P."/>
            <person name="Hua A."/>
            <person name="Kenton S."/>
            <person name="Lai H."/>
            <person name="Lao H.I."/>
            <person name="Lewis J."/>
            <person name="Lewis S."/>
            <person name="Lin S.-P."/>
            <person name="Loh P."/>
            <person name="Malaj E."/>
            <person name="Nguyen T."/>
            <person name="Pan H."/>
            <person name="Phan S."/>
            <person name="Qi S."/>
            <person name="Qian Y."/>
            <person name="Ray L."/>
            <person name="Ren Q."/>
            <person name="Shaull S."/>
            <person name="Sloan D."/>
            <person name="Song L."/>
            <person name="Wang Q."/>
            <person name="Wang Y."/>
            <person name="Wang Z."/>
            <person name="White J."/>
            <person name="Willingham D."/>
            <person name="Wu H."/>
            <person name="Yao Z."/>
            <person name="Zhan M."/>
            <person name="Zhang G."/>
            <person name="Chissoe S."/>
            <person name="Murray J."/>
            <person name="Miller N."/>
            <person name="Minx P."/>
            <person name="Fulton R."/>
            <person name="Johnson D."/>
            <person name="Bemis G."/>
            <person name="Bentley D."/>
            <person name="Bradshaw H."/>
            <person name="Bourne S."/>
            <person name="Cordes M."/>
            <person name="Du Z."/>
            <person name="Fulton L."/>
            <person name="Goela D."/>
            <person name="Graves T."/>
            <person name="Hawkins J."/>
            <person name="Hinds K."/>
            <person name="Kemp K."/>
            <person name="Latreille P."/>
            <person name="Layman D."/>
            <person name="Ozersky P."/>
            <person name="Rohlfing T."/>
            <person name="Scheet P."/>
            <person name="Walker C."/>
            <person name="Wamsley A."/>
            <person name="Wohldmann P."/>
            <person name="Pepin K."/>
            <person name="Nelson J."/>
            <person name="Korf I."/>
            <person name="Bedell J.A."/>
            <person name="Hillier L.W."/>
            <person name="Mardis E."/>
            <person name="Waterston R."/>
            <person name="Wilson R."/>
            <person name="Emanuel B.S."/>
            <person name="Shaikh T."/>
            <person name="Kurahashi H."/>
            <person name="Saitta S."/>
            <person name="Budarf M.L."/>
            <person name="McDermid H.E."/>
            <person name="Johnson A."/>
            <person name="Wong A.C.C."/>
            <person name="Morrow B.E."/>
            <person name="Edelmann L."/>
            <person name="Kim U.J."/>
            <person name="Shizuya H."/>
            <person name="Simon M.I."/>
            <person name="Dumanski J.P."/>
            <person name="Peyrard M."/>
            <person name="Kedra D."/>
            <person name="Seroussi E."/>
            <person name="Fransson I."/>
            <person name="Tapia I."/>
            <person name="Bruder C.E."/>
            <person name="O'Brien K.P."/>
            <person name="Wilkinson P."/>
            <person name="Bodenteich A."/>
            <person name="Hartman K."/>
            <person name="Hu X."/>
            <person name="Khan A.S."/>
            <person name="Lane L."/>
            <person name="Tilahun Y."/>
            <person name="Wright H."/>
        </authorList>
    </citation>
    <scope>NUCLEOTIDE SEQUENCE [LARGE SCALE GENOMIC DNA]</scope>
</reference>
<reference key="12">
    <citation type="submission" date="2005-07" db="EMBL/GenBank/DDBJ databases">
        <authorList>
            <person name="Mural R.J."/>
            <person name="Istrail S."/>
            <person name="Sutton G.G."/>
            <person name="Florea L."/>
            <person name="Halpern A.L."/>
            <person name="Mobarry C.M."/>
            <person name="Lippert R."/>
            <person name="Walenz B."/>
            <person name="Shatkay H."/>
            <person name="Dew I."/>
            <person name="Miller J.R."/>
            <person name="Flanigan M.J."/>
            <person name="Edwards N.J."/>
            <person name="Bolanos R."/>
            <person name="Fasulo D."/>
            <person name="Halldorsson B.V."/>
            <person name="Hannenhalli S."/>
            <person name="Turner R."/>
            <person name="Yooseph S."/>
            <person name="Lu F."/>
            <person name="Nusskern D.R."/>
            <person name="Shue B.C."/>
            <person name="Zheng X.H."/>
            <person name="Zhong F."/>
            <person name="Delcher A.L."/>
            <person name="Huson D.H."/>
            <person name="Kravitz S.A."/>
            <person name="Mouchard L."/>
            <person name="Reinert K."/>
            <person name="Remington K.A."/>
            <person name="Clark A.G."/>
            <person name="Waterman M.S."/>
            <person name="Eichler E.E."/>
            <person name="Adams M.D."/>
            <person name="Hunkapiller M.W."/>
            <person name="Myers E.W."/>
            <person name="Venter J.C."/>
        </authorList>
    </citation>
    <scope>NUCLEOTIDE SEQUENCE [LARGE SCALE GENOMIC DNA]</scope>
</reference>
<reference key="13">
    <citation type="journal article" date="2004" name="Genome Res.">
        <title>The status, quality, and expansion of the NIH full-length cDNA project: the Mammalian Gene Collection (MGC).</title>
        <authorList>
            <consortium name="The MGC Project Team"/>
        </authorList>
    </citation>
    <scope>NUCLEOTIDE SEQUENCE [LARGE SCALE MRNA] (ISOFORM 1)</scope>
    <source>
        <tissue>Brain</tissue>
    </source>
</reference>
<reference key="14">
    <citation type="journal article" date="1998" name="EMBO J.">
        <title>Mitogen- and stress-activated protein kinase-1 (MSK1) is directly activated by MAPK and SAPK2/p38, and may mediate activation of CREB.</title>
        <authorList>
            <person name="Deak M."/>
            <person name="Clifton A.D."/>
            <person name="Lucocq J.M."/>
            <person name="Alessi D.R."/>
        </authorList>
    </citation>
    <scope>FUNCTION IN ACTIVATION OF RPS6KA5/MSK1</scope>
</reference>
<reference key="15">
    <citation type="journal article" date="1999" name="Mol. Cell. Biol.">
        <title>Targeting of p38 mitogen-activated protein kinases to MEF2 transcription factors.</title>
        <authorList>
            <person name="Yang S.-H."/>
            <person name="Galanis A."/>
            <person name="Sharrocks A.D."/>
        </authorList>
    </citation>
    <scope>FUNCTION IN PHOSPHORYLATION OF MEF2A AND MEF2C</scope>
</reference>
<reference key="16">
    <citation type="journal article" date="2001" name="J. Biol. Chem.">
        <title>A Novel MAPK phosphatase MKP-7 acts preferentially on JNK/SAPK and p38 alpha and beta MAPKs.</title>
        <authorList>
            <person name="Tanoue T."/>
            <person name="Yamamoto T."/>
            <person name="Maeda R."/>
            <person name="Nishida E."/>
        </authorList>
    </citation>
    <scope>INTERACTION WITH DUSP16</scope>
    <scope>ACTIVITY REGULATION</scope>
</reference>
<reference key="17">
    <citation type="journal article" date="2001" name="Mol. Cell. Biol.">
        <title>The mitogen-activated protein kinase signal-integrating kinase Mnk2 is a eukaryotic initiation factor 4E kinase with high levels of basal activity in mammalian cells.</title>
        <authorList>
            <person name="Scheper G.C."/>
            <person name="Morrice N.A."/>
            <person name="Kleijn M."/>
            <person name="Proud C.G."/>
        </authorList>
    </citation>
    <scope>FUNCTION AS MKNK2 KINASE</scope>
</reference>
<reference key="18">
    <citation type="journal article" date="2004" name="J. Immunol.">
        <title>Histone deacetylase 3, a class I histone deacetylase, suppresses MAPK11-mediated activating transcription factor-2 activation and represses TNF gene expression.</title>
        <authorList>
            <person name="Mahlknecht U."/>
            <person name="Will J."/>
            <person name="Varin A."/>
            <person name="Hoelzer D."/>
            <person name="Herbein G."/>
        </authorList>
    </citation>
    <scope>INTERACTION WITH HDAC3</scope>
    <scope>PHOSPHORYLATION AT THR-180 AND TYR-182</scope>
    <scope>ACTIVITY REGULATION</scope>
    <scope>FUNCTION IN ATF2 ACTIVATION</scope>
    <scope>MUTAGENESIS OF THR-180 AND TYR-182</scope>
</reference>
<reference key="19">
    <citation type="journal article" date="2002" name="Biol. Chem.">
        <title>In the cellular garden of forking paths: how p38 MAPKs signal for downstream assistance.</title>
        <authorList>
            <person name="Shi Y."/>
            <person name="Gaestel M."/>
        </authorList>
    </citation>
    <scope>REVIEW ON FUNCTION</scope>
</reference>
<reference key="20">
    <citation type="journal article" date="2009" name="Mol. Cell. Proteomics">
        <title>Large-scale proteomics analysis of the human kinome.</title>
        <authorList>
            <person name="Oppermann F.S."/>
            <person name="Gnad F."/>
            <person name="Olsen J.V."/>
            <person name="Hornberger R."/>
            <person name="Greff Z."/>
            <person name="Keri G."/>
            <person name="Mann M."/>
            <person name="Daub H."/>
        </authorList>
    </citation>
    <scope>IDENTIFICATION BY MASS SPECTROMETRY [LARGE SCALE ANALYSIS]</scope>
</reference>
<reference key="21">
    <citation type="journal article" date="2010" name="Biochem. J.">
        <title>Mechanisms and functions of p38 MAPK signalling.</title>
        <authorList>
            <person name="Cuadrado A."/>
            <person name="Nebreda A.R."/>
        </authorList>
    </citation>
    <scope>REVIEW ON ACTIVITY REGULATION</scope>
    <scope>REVIEW ON FUNCTION</scope>
</reference>
<reference key="22">
    <citation type="journal article" date="2022" name="Science">
        <title>ZAKalpha-driven ribotoxic stress response activates the human NLRP1 inflammasome.</title>
        <authorList>
            <person name="Robinson K.S."/>
            <person name="Toh G.A."/>
            <person name="Rozario P."/>
            <person name="Chua R."/>
            <person name="Bauernfried S."/>
            <person name="Sun Z."/>
            <person name="Firdaus M.J."/>
            <person name="Bayat S."/>
            <person name="Nadkarni R."/>
            <person name="Poh Z.S."/>
            <person name="Tham K.C."/>
            <person name="Harapas C.R."/>
            <person name="Lim C.K."/>
            <person name="Chu W."/>
            <person name="Tay C.W.S."/>
            <person name="Tan K.Y."/>
            <person name="Zhao T."/>
            <person name="Bonnard C."/>
            <person name="Sobota R."/>
            <person name="Connolly J.E."/>
            <person name="Common J."/>
            <person name="Masters S.L."/>
            <person name="Chen K.W."/>
            <person name="Ho L."/>
            <person name="Wu B."/>
            <person name="Hornung V."/>
            <person name="Zhong F.L."/>
        </authorList>
    </citation>
    <scope>FUNCTION</scope>
    <scope>CATALYTIC ACTIVITY</scope>
</reference>
<reference key="23">
    <citation type="journal article" date="2024" name="FEBS J.">
        <title>Proline-directed yeast and human MAP kinases phosphorylate the Dot1p/DOT1L histone H3K79 methyltransferase.</title>
        <authorList>
            <person name="Separovich R.J."/>
            <person name="Karakatsanis N.M."/>
            <person name="Gao K."/>
            <person name="Fuh D."/>
            <person name="Hamey J.J."/>
            <person name="Wilkins M.R."/>
        </authorList>
    </citation>
    <scope>FUNCTION</scope>
    <scope>PHOSPHORYLATION AT THR-180 AND TYR-182</scope>
</reference>
<reference key="24">
    <citation type="journal article" date="2009" name="Acta Crystallogr. D">
        <title>The three-dimensional structure of MAP kinase p38beta: different features of the ATP-binding site in p38beta compared with p38alpha.</title>
        <authorList>
            <person name="Patel S.B."/>
            <person name="Cameron P.M."/>
            <person name="O'Keefe S.J."/>
            <person name="Frantz-Wattley B."/>
            <person name="Thompson J."/>
            <person name="O'Neill E.A."/>
            <person name="Tennis T."/>
            <person name="Liu L."/>
            <person name="Becker J.W."/>
            <person name="Scapin G."/>
        </authorList>
    </citation>
    <scope>X-RAY CRYSTALLOGRAPHY (2.05 ANGSTROMS) IN COMPLEX WITH INHIBITOR</scope>
</reference>
<reference key="25">
    <citation type="journal article" date="2007" name="Nature">
        <title>Patterns of somatic mutation in human cancer genomes.</title>
        <authorList>
            <person name="Greenman C."/>
            <person name="Stephens P."/>
            <person name="Smith R."/>
            <person name="Dalgliesh G.L."/>
            <person name="Hunter C."/>
            <person name="Bignell G."/>
            <person name="Davies H."/>
            <person name="Teague J."/>
            <person name="Butler A."/>
            <person name="Stevens C."/>
            <person name="Edkins S."/>
            <person name="O'Meara S."/>
            <person name="Vastrik I."/>
            <person name="Schmidt E.E."/>
            <person name="Avis T."/>
            <person name="Barthorpe S."/>
            <person name="Bhamra G."/>
            <person name="Buck G."/>
            <person name="Choudhury B."/>
            <person name="Clements J."/>
            <person name="Cole J."/>
            <person name="Dicks E."/>
            <person name="Forbes S."/>
            <person name="Gray K."/>
            <person name="Halliday K."/>
            <person name="Harrison R."/>
            <person name="Hills K."/>
            <person name="Hinton J."/>
            <person name="Jenkinson A."/>
            <person name="Jones D."/>
            <person name="Menzies A."/>
            <person name="Mironenko T."/>
            <person name="Perry J."/>
            <person name="Raine K."/>
            <person name="Richardson D."/>
            <person name="Shepherd R."/>
            <person name="Small A."/>
            <person name="Tofts C."/>
            <person name="Varian J."/>
            <person name="Webb T."/>
            <person name="West S."/>
            <person name="Widaa S."/>
            <person name="Yates A."/>
            <person name="Cahill D.P."/>
            <person name="Louis D.N."/>
            <person name="Goldstraw P."/>
            <person name="Nicholson A.G."/>
            <person name="Brasseur F."/>
            <person name="Looijenga L."/>
            <person name="Weber B.L."/>
            <person name="Chiew Y.-E."/>
            <person name="DeFazio A."/>
            <person name="Greaves M.F."/>
            <person name="Green A.R."/>
            <person name="Campbell P."/>
            <person name="Birney E."/>
            <person name="Easton D.F."/>
            <person name="Chenevix-Trench G."/>
            <person name="Tan M.-H."/>
            <person name="Khoo S.K."/>
            <person name="Teh B.T."/>
            <person name="Yuen S.T."/>
            <person name="Leung S.Y."/>
            <person name="Wooster R."/>
            <person name="Futreal P.A."/>
            <person name="Stratton M.R."/>
        </authorList>
    </citation>
    <scope>VARIANTS [LARGE SCALE ANALYSIS] VAL-221 AND HIS-275</scope>
</reference>
<sequence length="364" mass="41357">MSGPRAGFYRQELNKTVWEVPQRLQGLRPVGSGAYGSVCSAYDARLRQKVAVKKLSRPFQSLIHARRTYRELRLLKHLKHENVIGLLDVFTPATSIEDFSEVYLVTTLMGADLNNIVKCQALSDEHVQFLVYQLLRGLKYIHSAGIIHRDLKPSNVAVNEDCELRILDFGLARQADEEMTGYVATRWYRAPEIMLNWMHYNQTVDIWSVGCIMAELLQGKALFPGSDYIDQLKRIMEVVGTPSPEVLAKISSEHARTYIQSLPPMPQKDLSSIFRGANPLAIDLLGRMLVLDSDQRVSAAEALAHAYFSQYHDPEDEPEAEPYDESVEAKERTLEEWKELTYQEVLSFKPPEPPKPPGSLEIEQ</sequence>
<name>MK11_HUMAN</name>
<protein>
    <recommendedName>
        <fullName>Mitogen-activated protein kinase 11</fullName>
        <shortName>MAP kinase 11</shortName>
        <shortName>MAPK 11</shortName>
        <ecNumber evidence="10">2.7.11.24</ecNumber>
    </recommendedName>
    <alternativeName>
        <fullName>Mitogen-activated protein kinase p38 beta</fullName>
        <shortName>MAP kinase p38 beta</shortName>
        <shortName>p38b</shortName>
    </alternativeName>
    <alternativeName>
        <fullName>Stress-activated protein kinase 2b</fullName>
        <shortName>SAPK2b</shortName>
    </alternativeName>
    <alternativeName>
        <fullName>p38-2</fullName>
    </alternativeName>
</protein>
<gene>
    <name type="primary">MAPK11</name>
    <name type="synonym">PRKM11</name>
    <name type="synonym">SAPK2</name>
    <name type="synonym">SAPK2B</name>
</gene>
<comment type="function">
    <text evidence="4 5 7 10 11 13 14 16 18">Serine/threonine kinase which acts as an essential component of the MAP kinase signal transduction pathway (PubMed:12452429, PubMed:20626350, PubMed:35857590). MAPK11 is one of the four p38 MAPKs which play an important role in the cascades of cellular responses evoked by extracellular stimuli such as pro-inflammatory cytokines or physical stress leading to direct activation of transcription factors (PubMed:12452429, PubMed:20626350, PubMed:35857590). Accordingly, p38 MAPKs phosphorylate a broad range of proteins and it has been estimated that they may have approximately 200 to 300 substrates each (PubMed:12452429, PubMed:20626350, PubMed:35857590). MAPK11 functions are mostly redundant with those of MAPK14 (PubMed:12452429, PubMed:20626350, PubMed:35857590). Some of the targets are downstream kinases which are activated through phosphorylation and further phosphorylate additional targets (PubMed:12452429, PubMed:20626350). RPS6KA5/MSK1 and RPS6KA4/MSK2 can directly phosphorylate and activate transcription factors such as CREB1, ATF1, the NF-kappa-B isoform RELA/NFKB3, STAT1 and STAT3, but can also phosphorylate histone H3 and the nucleosomal protein HMGN1 (PubMed:9687510). RPS6KA5/MSK1 and RPS6KA4/MSK2 play important roles in the rapid induction of immediate-early genes in response to stress or mitogenic stimuli, either by inducing chromatin remodeling or by recruiting the transcription machinery. On the other hand, two other kinase targets, MAPKAPK2/MK2 and MAPKAPK3/MK3, participate in the control of gene expression mostly at the post-transcriptional level, by phosphorylating ZFP36 (tristetraprolin) and ELAVL1, and by regulating EEF2K, which is important for the elongation of mRNA during translation. MKNK1/MNK1 and MKNK2/MNK2, two other kinases activated by p38 MAPKs, regulate protein synthesis by phosphorylating the initiation factor EIF4E2 (PubMed:11154262). In the cytoplasm, the p38 MAPK pathway is an important regulator of protein turnover. For example, CFLAR is an inhibitor of TNF-induced apoptosis whose proteasome-mediated degradation is regulated by p38 MAPK phosphorylation. Ectodomain shedding of transmembrane proteins is regulated by p38 MAPKs as well. In response to inflammatory stimuli, p38 MAPKs phosphorylate the membrane-associated metalloprotease ADAM17. Such phosphorylation is required for ADAM17-mediated ectodomain shedding of TGF-alpha family ligands, which results in the activation of EGFR signaling and cell proliferation. Additional examples of p38 MAPK substrates are the FGFR1. FGFR1 can be translocated from the extracellular space into the cytosol and nucleus of target cells, and regulates processes such as rRNA synthesis and cell growth. FGFR1 translocation requires p38 MAPK activation. In the nucleus, many transcription factors are phosphorylated and activated by p38 MAPKs in response to different stimuli. Classical examples include ATF1, ATF2, ATF6, ELK1, PTPRH, DDIT3, TP53/p53 and MEF2C and MEF2A (PubMed:10330143, PubMed:15356147, PubMed:9430721). The p38 MAPKs are emerging as important modulators of gene expression by regulating chromatin modifiers and remodelers (PubMed:10330143, PubMed:15356147, PubMed:9430721). The promoters of several genes involved in the inflammatory response, such as IL6, IL8 and IL12B, display a p38 MAPK-dependent enrichment of histone H3 phosphorylation on 'Ser-10' (H3S10ph) in LPS-stimulated myeloid cells. This phosphorylation enhances the accessibility of the cryptic NF-kappa-B-binding sites marking promoters for increased NF-kappa-B recruitment. Phosphorylates NLRP1 downstream of MAP3K20/ZAK in response to UV-B irradiation and ribosome collisions, promoting activation of the NLRP1 inflammasome and pyroptosis (PubMed:35857590). Phosphorylates methyltransferase DOT1L on 'Ser-834', 'Thr-900', 'Ser-902', 'Thr-984', 'Ser-1001', 'Ser-1009' and 'Ser-1104' (PubMed:38270553).</text>
</comment>
<comment type="catalytic activity">
    <reaction evidence="10">
        <text>L-seryl-[protein] + ATP = O-phospho-L-seryl-[protein] + ADP + H(+)</text>
        <dbReference type="Rhea" id="RHEA:17989"/>
        <dbReference type="Rhea" id="RHEA-COMP:9863"/>
        <dbReference type="Rhea" id="RHEA-COMP:11604"/>
        <dbReference type="ChEBI" id="CHEBI:15378"/>
        <dbReference type="ChEBI" id="CHEBI:29999"/>
        <dbReference type="ChEBI" id="CHEBI:30616"/>
        <dbReference type="ChEBI" id="CHEBI:83421"/>
        <dbReference type="ChEBI" id="CHEBI:456216"/>
        <dbReference type="EC" id="2.7.11.24"/>
    </reaction>
    <physiologicalReaction direction="left-to-right" evidence="10">
        <dbReference type="Rhea" id="RHEA:17990"/>
    </physiologicalReaction>
</comment>
<comment type="catalytic activity">
    <reaction evidence="10">
        <text>L-threonyl-[protein] + ATP = O-phospho-L-threonyl-[protein] + ADP + H(+)</text>
        <dbReference type="Rhea" id="RHEA:46608"/>
        <dbReference type="Rhea" id="RHEA-COMP:11060"/>
        <dbReference type="Rhea" id="RHEA-COMP:11605"/>
        <dbReference type="ChEBI" id="CHEBI:15378"/>
        <dbReference type="ChEBI" id="CHEBI:30013"/>
        <dbReference type="ChEBI" id="CHEBI:30616"/>
        <dbReference type="ChEBI" id="CHEBI:61977"/>
        <dbReference type="ChEBI" id="CHEBI:456216"/>
        <dbReference type="EC" id="2.7.11.24"/>
    </reaction>
    <physiologicalReaction direction="left-to-right" evidence="10">
        <dbReference type="Rhea" id="RHEA:46609"/>
    </physiologicalReaction>
</comment>
<comment type="cofactor">
    <cofactor evidence="1">
        <name>Mg(2+)</name>
        <dbReference type="ChEBI" id="CHEBI:18420"/>
    </cofactor>
</comment>
<comment type="activity regulation">
    <text evidence="6 7 12 13">Activated by phosphorylation on threonine and tyrosine by MAP2K3/MKK3, MAP2K4/MKK4 and MAP2K6/MKK6. MAP2K3/MKK3 and MAP2K6/MKK6 are both essential for the activation of MAPK11 induced by environmental stress. HDAC3 interacts directly and selectively with MAPK11 to repress ATF2 transcriptional activity, and regulate TNF gene expression in LPS-stimulated cells. Inhibited by SB203580 and pyridinyl-imidazole related compounds.</text>
</comment>
<comment type="subunit">
    <text evidence="6 7 9">Interacts with HDAC3 and DUSP16.</text>
</comment>
<comment type="interaction">
    <interactant intactId="EBI-298304">
        <id>Q15759</id>
    </interactant>
    <interactant intactId="EBI-11954292">
        <id>Q86V38</id>
        <label>ATN1</label>
    </interactant>
    <organismsDiffer>false</organismsDiffer>
    <experiments>3</experiments>
</comment>
<comment type="interaction">
    <interactant intactId="EBI-298304">
        <id>Q15759</id>
    </interactant>
    <interactant intactId="EBI-6875961">
        <id>P02489</id>
        <label>CRYAA</label>
    </interactant>
    <organismsDiffer>false</organismsDiffer>
    <experiments>3</experiments>
</comment>
<comment type="interaction">
    <interactant intactId="EBI-298304">
        <id>Q15759</id>
    </interactant>
    <interactant intactId="EBI-10968534">
        <id>P50570-2</id>
        <label>DNM2</label>
    </interactant>
    <organismsDiffer>false</organismsDiffer>
    <experiments>3</experiments>
</comment>
<comment type="interaction">
    <interactant intactId="EBI-298304">
        <id>Q15759</id>
    </interactant>
    <interactant intactId="EBI-356015">
        <id>Q14204</id>
        <label>DYNC1H1</label>
    </interactant>
    <organismsDiffer>false</organismsDiffer>
    <experiments>3</experiments>
</comment>
<comment type="interaction">
    <interactant intactId="EBI-298304">
        <id>Q15759</id>
    </interactant>
    <interactant intactId="EBI-348399">
        <id>P22607</id>
        <label>FGFR3</label>
    </interactant>
    <organismsDiffer>false</organismsDiffer>
    <experiments>3</experiments>
</comment>
<comment type="interaction">
    <interactant intactId="EBI-298304">
        <id>Q15759</id>
    </interactant>
    <interactant intactId="EBI-25913156">
        <id>O14908-2</id>
        <label>GIPC1</label>
    </interactant>
    <organismsDiffer>false</organismsDiffer>
    <experiments>3</experiments>
</comment>
<comment type="interaction">
    <interactant intactId="EBI-298304">
        <id>Q15759</id>
    </interactant>
    <interactant intactId="EBI-399080">
        <id>Q92993</id>
        <label>KAT5</label>
    </interactant>
    <organismsDiffer>false</organismsDiffer>
    <experiments>3</experiments>
</comment>
<comment type="interaction">
    <interactant intactId="EBI-298304">
        <id>Q15759</id>
    </interactant>
    <interactant intactId="EBI-2432309">
        <id>Q92876</id>
        <label>KLK6</label>
    </interactant>
    <organismsDiffer>false</organismsDiffer>
    <experiments>3</experiments>
</comment>
<comment type="interaction">
    <interactant intactId="EBI-298304">
        <id>Q15759</id>
    </interactant>
    <interactant intactId="EBI-11742507">
        <id>Q8TAP4-4</id>
        <label>LMO3</label>
    </interactant>
    <organismsDiffer>false</organismsDiffer>
    <experiments>3</experiments>
</comment>
<comment type="interaction">
    <interactant intactId="EBI-298304">
        <id>Q15759</id>
    </interactant>
    <interactant intactId="EBI-1384657">
        <id>Q16644</id>
        <label>MAPKAPK3</label>
    </interactant>
    <organismsDiffer>false</organismsDiffer>
    <experiments>7</experiments>
</comment>
<comment type="interaction">
    <interactant intactId="EBI-298304">
        <id>Q15759</id>
    </interactant>
    <interactant intactId="EBI-1307">
        <id>Q13153</id>
        <label>PAK1</label>
    </interactant>
    <organismsDiffer>false</organismsDiffer>
    <experiments>3</experiments>
</comment>
<comment type="interaction">
    <interactant intactId="EBI-298304">
        <id>Q15759</id>
    </interactant>
    <interactant intactId="EBI-1383528">
        <id>P17252</id>
        <label>PRKCA</label>
    </interactant>
    <organismsDiffer>false</organismsDiffer>
    <experiments>3</experiments>
</comment>
<comment type="interaction">
    <interactant intactId="EBI-298304">
        <id>Q15759</id>
    </interactant>
    <interactant intactId="EBI-9090795">
        <id>Q15047-2</id>
        <label>SETDB1</label>
    </interactant>
    <organismsDiffer>false</organismsDiffer>
    <experiments>3</experiments>
</comment>
<comment type="interaction">
    <interactant intactId="EBI-298304">
        <id>Q15759</id>
    </interactant>
    <interactant intactId="EBI-395421">
        <id>Q16637</id>
        <label>SMN2</label>
    </interactant>
    <organismsDiffer>false</organismsDiffer>
    <experiments>3</experiments>
</comment>
<comment type="interaction">
    <interactant intactId="EBI-298304">
        <id>Q15759</id>
    </interactant>
    <interactant intactId="EBI-372899">
        <id>Q13148</id>
        <label>TARDBP</label>
    </interactant>
    <organismsDiffer>false</organismsDiffer>
    <experiments>6</experiments>
</comment>
<comment type="interaction">
    <interactant intactId="EBI-298304">
        <id>Q15759</id>
    </interactant>
    <interactant intactId="EBI-366083">
        <id>P04637</id>
        <label>TP53</label>
    </interactant>
    <organismsDiffer>false</organismsDiffer>
    <experiments>2</experiments>
</comment>
<comment type="interaction">
    <interactant intactId="EBI-298304">
        <id>Q15759</id>
    </interactant>
    <interactant intactId="EBI-359832">
        <id>P61981</id>
        <label>YWHAG</label>
    </interactant>
    <organismsDiffer>false</organismsDiffer>
    <experiments>3</experiments>
</comment>
<comment type="interaction">
    <interactant intactId="EBI-298304">
        <id>Q15759</id>
    </interactant>
    <interactant intactId="EBI-347522">
        <id>O43257</id>
        <label>ZNHIT1</label>
    </interactant>
    <organismsDiffer>false</organismsDiffer>
    <experiments>2</experiments>
</comment>
<comment type="subcellular location">
    <subcellularLocation>
        <location evidence="1">Cytoplasm</location>
    </subcellularLocation>
    <subcellularLocation>
        <location evidence="1">Nucleus</location>
    </subcellularLocation>
</comment>
<comment type="alternative products">
    <event type="alternative splicing"/>
    <isoform>
        <id>Q15759-1</id>
        <name>1</name>
        <sequence type="displayed"/>
    </isoform>
    <isoform>
        <id>Q15759-3</id>
        <name>2</name>
        <sequence type="described" ref="VSP_055221 VSP_055222 VSP_055223"/>
    </isoform>
</comment>
<comment type="tissue specificity">
    <text>Highest levels in the brain and heart. Also expressed in the placenta, lung, liver, skeletal muscle, kidney and pancreas.</text>
</comment>
<comment type="domain">
    <text>The TXY motif contains the threonine and tyrosine residues whose phosphorylation activates the MAP kinases.</text>
</comment>
<comment type="PTM">
    <text evidence="7">Dually phosphorylated on Thr-180 and Tyr-182 by MAP2K3/MKK3, MAP2K4/MKK4 and MAP2K6/MKK6, which activates the enzyme.</text>
</comment>
<comment type="similarity">
    <text evidence="19">Belongs to the protein kinase superfamily. CMGC Ser/Thr protein kinase family. MAP kinase subfamily.</text>
</comment>
<evidence type="ECO:0000250" key="1"/>
<evidence type="ECO:0000255" key="2">
    <source>
        <dbReference type="PROSITE-ProRule" id="PRU00159"/>
    </source>
</evidence>
<evidence type="ECO:0000256" key="3">
    <source>
        <dbReference type="SAM" id="MobiDB-lite"/>
    </source>
</evidence>
<evidence type="ECO:0000269" key="4">
    <source>
    </source>
</evidence>
<evidence type="ECO:0000269" key="5">
    <source>
    </source>
</evidence>
<evidence type="ECO:0000269" key="6">
    <source>
    </source>
</evidence>
<evidence type="ECO:0000269" key="7">
    <source>
    </source>
</evidence>
<evidence type="ECO:0000269" key="8">
    <source>
    </source>
</evidence>
<evidence type="ECO:0000269" key="9">
    <source>
    </source>
</evidence>
<evidence type="ECO:0000269" key="10">
    <source>
    </source>
</evidence>
<evidence type="ECO:0000269" key="11">
    <source>
    </source>
</evidence>
<evidence type="ECO:0000269" key="12">
    <source>
    </source>
</evidence>
<evidence type="ECO:0000269" key="13">
    <source>
    </source>
</evidence>
<evidence type="ECO:0000269" key="14">
    <source>
    </source>
</evidence>
<evidence type="ECO:0000269" key="15">
    <source ref="9"/>
</evidence>
<evidence type="ECO:0000303" key="16">
    <source>
    </source>
</evidence>
<evidence type="ECO:0000303" key="17">
    <source>
    </source>
</evidence>
<evidence type="ECO:0000303" key="18">
    <source>
    </source>
</evidence>
<evidence type="ECO:0000305" key="19"/>
<evidence type="ECO:0000305" key="20">
    <source>
    </source>
</evidence>
<evidence type="ECO:0007829" key="21">
    <source>
        <dbReference type="PDB" id="3GC8"/>
    </source>
</evidence>
<evidence type="ECO:0007829" key="22">
    <source>
        <dbReference type="PDB" id="3GC9"/>
    </source>
</evidence>
<evidence type="ECO:0007829" key="23">
    <source>
        <dbReference type="PDB" id="3GP0"/>
    </source>
</evidence>
<accession>Q15759</accession>
<accession>A8K730</accession>
<accession>B0LPG1</accession>
<accession>B7Z630</accession>
<accession>E7ETQ1</accession>
<accession>L7RT27</accession>
<accession>O00284</accession>
<accession>O15472</accession>
<accession>Q2XNF2</accession>
<organism>
    <name type="scientific">Homo sapiens</name>
    <name type="common">Human</name>
    <dbReference type="NCBI Taxonomy" id="9606"/>
    <lineage>
        <taxon>Eukaryota</taxon>
        <taxon>Metazoa</taxon>
        <taxon>Chordata</taxon>
        <taxon>Craniata</taxon>
        <taxon>Vertebrata</taxon>
        <taxon>Euteleostomi</taxon>
        <taxon>Mammalia</taxon>
        <taxon>Eutheria</taxon>
        <taxon>Euarchontoglires</taxon>
        <taxon>Primates</taxon>
        <taxon>Haplorrhini</taxon>
        <taxon>Catarrhini</taxon>
        <taxon>Hominidae</taxon>
        <taxon>Homo</taxon>
    </lineage>
</organism>
<proteinExistence type="evidence at protein level"/>